<evidence type="ECO:0000250" key="1">
    <source>
        <dbReference type="UniProtKB" id="O08498"/>
    </source>
</evidence>
<evidence type="ECO:0000255" key="2"/>
<evidence type="ECO:0000305" key="3"/>
<proteinExistence type="inferred from homology"/>
<keyword id="KW-0046">Antibiotic resistance</keyword>
<keyword id="KW-0378">Hydrolase</keyword>
<keyword id="KW-0479">Metal-binding</keyword>
<keyword id="KW-0574">Periplasm</keyword>
<keyword id="KW-0732">Signal</keyword>
<keyword id="KW-0862">Zinc</keyword>
<name>BLAB5_ELIME</name>
<organism>
    <name type="scientific">Elizabethkingia meningoseptica</name>
    <name type="common">Chryseobacterium meningosepticum</name>
    <dbReference type="NCBI Taxonomy" id="238"/>
    <lineage>
        <taxon>Bacteria</taxon>
        <taxon>Pseudomonadati</taxon>
        <taxon>Bacteroidota</taxon>
        <taxon>Flavobacteriia</taxon>
        <taxon>Flavobacteriales</taxon>
        <taxon>Weeksellaceae</taxon>
        <taxon>Elizabethkingia</taxon>
    </lineage>
</organism>
<sequence length="249" mass="28161">MLKRLKGLLVLALGFTGLQVFGQQNPDIKIEKLKDNLYVYTTYNTFKGTKYAANAVYMVTDKGVVVIDSPWGEDKFKSFTDEIYKKHGKKVIMNIATHSHDDRAGGLEYFGKLGAKTYSTKMTDSILAKENKPRAKYTFDNNKSFKVGNTEFQVYYPGKGHTADNVVVWFPKDKVLVGGCIVKSGDSKDLGYIGEAYVNDWTQSIHNIQQKFPDVQYVVAGHDDWKDQTSIQHTLDLISDYQQKQKASN</sequence>
<reference key="1">
    <citation type="journal article" date="2000" name="Antimicrob. Agents Chemother.">
        <title>Molecular and biochemical heterogeneity of class B carbapenem-hydrolyzing beta-lactamases in Chryseobacterium meningosepticum.</title>
        <authorList>
            <person name="Bellais S."/>
            <person name="Aubert D."/>
            <person name="Naas T."/>
            <person name="Nordmann P."/>
        </authorList>
    </citation>
    <scope>NUCLEOTIDE SEQUENCE [GENOMIC DNA]</scope>
    <source>
        <strain>NCTC 11306 / CIP 79.5</strain>
    </source>
</reference>
<comment type="function">
    <text evidence="1">Confers resistance to the different beta-lactams antibiotics (penicillin, cephalosporin and carbapenem) via the hydrolysis of the beta-lactam ring.</text>
</comment>
<comment type="catalytic activity">
    <reaction evidence="1">
        <text>a beta-lactam + H2O = a substituted beta-amino acid</text>
        <dbReference type="Rhea" id="RHEA:20401"/>
        <dbReference type="ChEBI" id="CHEBI:15377"/>
        <dbReference type="ChEBI" id="CHEBI:35627"/>
        <dbReference type="ChEBI" id="CHEBI:140347"/>
        <dbReference type="EC" id="3.5.2.6"/>
    </reaction>
</comment>
<comment type="cofactor">
    <cofactor evidence="1">
        <name>Zn(2+)</name>
        <dbReference type="ChEBI" id="CHEBI:29105"/>
    </cofactor>
    <text evidence="1">Binds 2 Zn(2+) ions per subunit.</text>
</comment>
<comment type="subunit">
    <text evidence="1">Monomer.</text>
</comment>
<comment type="subcellular location">
    <subcellularLocation>
        <location evidence="3">Periplasm</location>
    </subcellularLocation>
</comment>
<comment type="similarity">
    <text evidence="3">Belongs to the metallo-beta-lactamase superfamily. Class-B beta-lactamase family.</text>
</comment>
<accession>Q9KJA9</accession>
<dbReference type="EC" id="3.5.2.6" evidence="1"/>
<dbReference type="EMBL" id="AF189303">
    <property type="protein sequence ID" value="AAF89159.1"/>
    <property type="molecule type" value="Genomic_DNA"/>
</dbReference>
<dbReference type="RefSeq" id="WP_063857828.1">
    <property type="nucleotide sequence ID" value="NG_048699.1"/>
</dbReference>
<dbReference type="SMR" id="Q9KJA9"/>
<dbReference type="CARD" id="ARO:3005553">
    <property type="molecule name" value="BlaB-5"/>
    <property type="mechanism identifier" value="ARO:0001004"/>
    <property type="mechanism name" value="antibiotic inactivation"/>
</dbReference>
<dbReference type="KEGG" id="ag:AAF89159"/>
<dbReference type="GO" id="GO:0042597">
    <property type="term" value="C:periplasmic space"/>
    <property type="evidence" value="ECO:0007669"/>
    <property type="project" value="UniProtKB-SubCell"/>
</dbReference>
<dbReference type="GO" id="GO:0008800">
    <property type="term" value="F:beta-lactamase activity"/>
    <property type="evidence" value="ECO:0007669"/>
    <property type="project" value="UniProtKB-EC"/>
</dbReference>
<dbReference type="GO" id="GO:0008270">
    <property type="term" value="F:zinc ion binding"/>
    <property type="evidence" value="ECO:0007669"/>
    <property type="project" value="InterPro"/>
</dbReference>
<dbReference type="GO" id="GO:0017001">
    <property type="term" value="P:antibiotic catabolic process"/>
    <property type="evidence" value="ECO:0007669"/>
    <property type="project" value="InterPro"/>
</dbReference>
<dbReference type="GO" id="GO:0046677">
    <property type="term" value="P:response to antibiotic"/>
    <property type="evidence" value="ECO:0007669"/>
    <property type="project" value="UniProtKB-KW"/>
</dbReference>
<dbReference type="CDD" id="cd16316">
    <property type="entry name" value="BlaB-like_MBL-B1"/>
    <property type="match status" value="1"/>
</dbReference>
<dbReference type="Gene3D" id="3.60.15.10">
    <property type="entry name" value="Ribonuclease Z/Hydroxyacylglutathione hydrolase-like"/>
    <property type="match status" value="1"/>
</dbReference>
<dbReference type="InterPro" id="IPR001018">
    <property type="entry name" value="Beta-lactamase_class-B_CS"/>
</dbReference>
<dbReference type="InterPro" id="IPR001279">
    <property type="entry name" value="Metallo-B-lactamas"/>
</dbReference>
<dbReference type="InterPro" id="IPR050855">
    <property type="entry name" value="NDM-1-like"/>
</dbReference>
<dbReference type="InterPro" id="IPR036866">
    <property type="entry name" value="RibonucZ/Hydroxyglut_hydro"/>
</dbReference>
<dbReference type="NCBIfam" id="NF012229">
    <property type="entry name" value="bla_class_B_core"/>
    <property type="match status" value="1"/>
</dbReference>
<dbReference type="NCBIfam" id="NF033088">
    <property type="entry name" value="bla_subclass_B1"/>
    <property type="match status" value="1"/>
</dbReference>
<dbReference type="NCBIfam" id="NF033107">
    <property type="entry name" value="blaB"/>
    <property type="match status" value="1"/>
</dbReference>
<dbReference type="NCBIfam" id="NF012146">
    <property type="entry name" value="blaB-IND-MUS"/>
    <property type="match status" value="1"/>
</dbReference>
<dbReference type="PANTHER" id="PTHR42951:SF4">
    <property type="entry name" value="ACYL-COENZYME A THIOESTERASE MBLAC2"/>
    <property type="match status" value="1"/>
</dbReference>
<dbReference type="PANTHER" id="PTHR42951">
    <property type="entry name" value="METALLO-BETA-LACTAMASE DOMAIN-CONTAINING"/>
    <property type="match status" value="1"/>
</dbReference>
<dbReference type="Pfam" id="PF00753">
    <property type="entry name" value="Lactamase_B"/>
    <property type="match status" value="1"/>
</dbReference>
<dbReference type="SMART" id="SM00849">
    <property type="entry name" value="Lactamase_B"/>
    <property type="match status" value="1"/>
</dbReference>
<dbReference type="SUPFAM" id="SSF56281">
    <property type="entry name" value="Metallo-hydrolase/oxidoreductase"/>
    <property type="match status" value="1"/>
</dbReference>
<dbReference type="PROSITE" id="PS00743">
    <property type="entry name" value="BETA_LACTAMASE_B_1"/>
    <property type="match status" value="1"/>
</dbReference>
<dbReference type="PROSITE" id="PS00744">
    <property type="entry name" value="BETA_LACTAMASE_B_2"/>
    <property type="match status" value="1"/>
</dbReference>
<gene>
    <name type="primary">blaB5</name>
    <name evidence="1" type="synonym">blaB</name>
</gene>
<protein>
    <recommendedName>
        <fullName evidence="3">Metallo-beta-lactamase type 2</fullName>
        <ecNumber evidence="1">3.5.2.6</ecNumber>
    </recommendedName>
    <alternativeName>
        <fullName evidence="1">B2 metallo-beta-lactamase</fullName>
    </alternativeName>
    <alternativeName>
        <fullName evidence="1">Beta-lactamase type II</fullName>
    </alternativeName>
    <alternativeName>
        <fullName evidence="1">Carbapenem-hydrolyzing beta-lactamase BlaB-5</fullName>
        <shortName evidence="1">CHbetaL-5</shortName>
    </alternativeName>
    <alternativeName>
        <fullName evidence="1">Class B carbapenemase BlaB-5</fullName>
    </alternativeName>
    <alternativeName>
        <fullName evidence="1">Metallo-beta-lactamase type II</fullName>
    </alternativeName>
</protein>
<feature type="signal peptide" evidence="1 2">
    <location>
        <begin position="1"/>
        <end position="22"/>
    </location>
</feature>
<feature type="chain" id="PRO_0000016953" description="Metallo-beta-lactamase type 2">
    <location>
        <begin position="23"/>
        <end position="249"/>
    </location>
</feature>
<feature type="binding site" evidence="1">
    <location>
        <position position="98"/>
    </location>
    <ligand>
        <name>Zn(2+)</name>
        <dbReference type="ChEBI" id="CHEBI:29105"/>
        <label>1</label>
    </ligand>
</feature>
<feature type="binding site" evidence="1">
    <location>
        <position position="100"/>
    </location>
    <ligand>
        <name>Zn(2+)</name>
        <dbReference type="ChEBI" id="CHEBI:29105"/>
        <label>1</label>
    </ligand>
</feature>
<feature type="binding site" evidence="1">
    <location>
        <position position="102"/>
    </location>
    <ligand>
        <name>Zn(2+)</name>
        <dbReference type="ChEBI" id="CHEBI:29105"/>
        <label>2</label>
    </ligand>
</feature>
<feature type="binding site" evidence="1">
    <location>
        <position position="161"/>
    </location>
    <ligand>
        <name>Zn(2+)</name>
        <dbReference type="ChEBI" id="CHEBI:29105"/>
        <label>1</label>
    </ligand>
</feature>
<feature type="binding site" evidence="1">
    <location>
        <position position="180"/>
    </location>
    <ligand>
        <name>Zn(2+)</name>
        <dbReference type="ChEBI" id="CHEBI:29105"/>
        <label>2</label>
    </ligand>
</feature>
<feature type="binding site" evidence="1">
    <location>
        <position position="183"/>
    </location>
    <ligand>
        <name>substrate</name>
    </ligand>
</feature>
<feature type="binding site" evidence="1">
    <location>
        <position position="222"/>
    </location>
    <ligand>
        <name>Zn(2+)</name>
        <dbReference type="ChEBI" id="CHEBI:29105"/>
        <label>2</label>
    </ligand>
</feature>